<organism>
    <name type="scientific">Rhizobium etli (strain CIAT 652)</name>
    <dbReference type="NCBI Taxonomy" id="491916"/>
    <lineage>
        <taxon>Bacteria</taxon>
        <taxon>Pseudomonadati</taxon>
        <taxon>Pseudomonadota</taxon>
        <taxon>Alphaproteobacteria</taxon>
        <taxon>Hyphomicrobiales</taxon>
        <taxon>Rhizobiaceae</taxon>
        <taxon>Rhizobium/Agrobacterium group</taxon>
        <taxon>Rhizobium</taxon>
    </lineage>
</organism>
<name>RL29_RHIE6</name>
<gene>
    <name evidence="1" type="primary">rpmC</name>
    <name type="ordered locus">RHECIAT_CH0001757</name>
</gene>
<dbReference type="EMBL" id="CP001074">
    <property type="protein sequence ID" value="ACE90727.1"/>
    <property type="molecule type" value="Genomic_DNA"/>
</dbReference>
<dbReference type="SMR" id="B3PWS9"/>
<dbReference type="KEGG" id="rec:RHECIAT_CH0001757"/>
<dbReference type="eggNOG" id="COG0255">
    <property type="taxonomic scope" value="Bacteria"/>
</dbReference>
<dbReference type="HOGENOM" id="CLU_158491_1_0_5"/>
<dbReference type="Proteomes" id="UP000008817">
    <property type="component" value="Chromosome"/>
</dbReference>
<dbReference type="GO" id="GO:0022625">
    <property type="term" value="C:cytosolic large ribosomal subunit"/>
    <property type="evidence" value="ECO:0007669"/>
    <property type="project" value="TreeGrafter"/>
</dbReference>
<dbReference type="GO" id="GO:0003735">
    <property type="term" value="F:structural constituent of ribosome"/>
    <property type="evidence" value="ECO:0007669"/>
    <property type="project" value="InterPro"/>
</dbReference>
<dbReference type="GO" id="GO:0006412">
    <property type="term" value="P:translation"/>
    <property type="evidence" value="ECO:0007669"/>
    <property type="project" value="UniProtKB-UniRule"/>
</dbReference>
<dbReference type="CDD" id="cd00427">
    <property type="entry name" value="Ribosomal_L29_HIP"/>
    <property type="match status" value="1"/>
</dbReference>
<dbReference type="FunFam" id="1.10.287.310:FF:000001">
    <property type="entry name" value="50S ribosomal protein L29"/>
    <property type="match status" value="1"/>
</dbReference>
<dbReference type="Gene3D" id="1.10.287.310">
    <property type="match status" value="1"/>
</dbReference>
<dbReference type="HAMAP" id="MF_00374">
    <property type="entry name" value="Ribosomal_uL29"/>
    <property type="match status" value="1"/>
</dbReference>
<dbReference type="InterPro" id="IPR050063">
    <property type="entry name" value="Ribosomal_protein_uL29"/>
</dbReference>
<dbReference type="InterPro" id="IPR001854">
    <property type="entry name" value="Ribosomal_uL29"/>
</dbReference>
<dbReference type="InterPro" id="IPR018254">
    <property type="entry name" value="Ribosomal_uL29_CS"/>
</dbReference>
<dbReference type="InterPro" id="IPR036049">
    <property type="entry name" value="Ribosomal_uL29_sf"/>
</dbReference>
<dbReference type="NCBIfam" id="TIGR00012">
    <property type="entry name" value="L29"/>
    <property type="match status" value="1"/>
</dbReference>
<dbReference type="PANTHER" id="PTHR10916">
    <property type="entry name" value="60S RIBOSOMAL PROTEIN L35/50S RIBOSOMAL PROTEIN L29"/>
    <property type="match status" value="1"/>
</dbReference>
<dbReference type="PANTHER" id="PTHR10916:SF0">
    <property type="entry name" value="LARGE RIBOSOMAL SUBUNIT PROTEIN UL29C"/>
    <property type="match status" value="1"/>
</dbReference>
<dbReference type="Pfam" id="PF00831">
    <property type="entry name" value="Ribosomal_L29"/>
    <property type="match status" value="1"/>
</dbReference>
<dbReference type="SUPFAM" id="SSF46561">
    <property type="entry name" value="Ribosomal protein L29 (L29p)"/>
    <property type="match status" value="1"/>
</dbReference>
<dbReference type="PROSITE" id="PS00579">
    <property type="entry name" value="RIBOSOMAL_L29"/>
    <property type="match status" value="1"/>
</dbReference>
<evidence type="ECO:0000255" key="1">
    <source>
        <dbReference type="HAMAP-Rule" id="MF_00374"/>
    </source>
</evidence>
<evidence type="ECO:0000305" key="2"/>
<accession>B3PWS9</accession>
<keyword id="KW-0687">Ribonucleoprotein</keyword>
<keyword id="KW-0689">Ribosomal protein</keyword>
<comment type="similarity">
    <text evidence="1">Belongs to the universal ribosomal protein uL29 family.</text>
</comment>
<reference key="1">
    <citation type="journal article" date="2010" name="Appl. Environ. Microbiol.">
        <title>Conserved symbiotic plasmid DNA sequences in the multireplicon pangenomic structure of Rhizobium etli.</title>
        <authorList>
            <person name="Gonzalez V."/>
            <person name="Acosta J.L."/>
            <person name="Santamaria R.I."/>
            <person name="Bustos P."/>
            <person name="Fernandez J.L."/>
            <person name="Hernandez Gonzalez I.L."/>
            <person name="Diaz R."/>
            <person name="Flores M."/>
            <person name="Palacios R."/>
            <person name="Mora J."/>
            <person name="Davila G."/>
        </authorList>
    </citation>
    <scope>NUCLEOTIDE SEQUENCE [LARGE SCALE GENOMIC DNA]</scope>
    <source>
        <strain>CIAT 652</strain>
    </source>
</reference>
<proteinExistence type="inferred from homology"/>
<feature type="chain" id="PRO_1000121804" description="Large ribosomal subunit protein uL29">
    <location>
        <begin position="1"/>
        <end position="66"/>
    </location>
</feature>
<protein>
    <recommendedName>
        <fullName evidence="1">Large ribosomal subunit protein uL29</fullName>
    </recommendedName>
    <alternativeName>
        <fullName evidence="2">50S ribosomal protein L29</fullName>
    </alternativeName>
</protein>
<sequence>MKASDVRALTADQLKDELAKLKKEQFNLRFQKATGQLEKSSRINEVRKDIARVKTIARQKAAEVKA</sequence>